<reference key="1">
    <citation type="submission" date="2008-06" db="EMBL/GenBank/DDBJ databases">
        <title>Complete sequence of chromosome of Prosthecochloris aestuarii DSM 271.</title>
        <authorList>
            <consortium name="US DOE Joint Genome Institute"/>
            <person name="Lucas S."/>
            <person name="Copeland A."/>
            <person name="Lapidus A."/>
            <person name="Glavina del Rio T."/>
            <person name="Dalin E."/>
            <person name="Tice H."/>
            <person name="Bruce D."/>
            <person name="Goodwin L."/>
            <person name="Pitluck S."/>
            <person name="Schmutz J."/>
            <person name="Larimer F."/>
            <person name="Land M."/>
            <person name="Hauser L."/>
            <person name="Kyrpides N."/>
            <person name="Anderson I."/>
            <person name="Liu Z."/>
            <person name="Li T."/>
            <person name="Zhao F."/>
            <person name="Overmann J."/>
            <person name="Bryant D.A."/>
            <person name="Richardson P."/>
        </authorList>
    </citation>
    <scope>NUCLEOTIDE SEQUENCE [LARGE SCALE GENOMIC DNA]</scope>
    <source>
        <strain>DSM 271 / SK 413</strain>
    </source>
</reference>
<sequence length="436" mass="49370">MKPLVALVGRPNVGKSTLFNRITHQKSAIVDSTPGVTRDRHIMPAEWIGKEFLVMDTGGYCHDSDGISKAMLEQTLTAIGEADVIIFLVDVRSGLTYLDLDMAKLLKRDFNDKPVYFAVNKVESPQLAYEGESFRKTGFTEPWFISARDGSGVADLLDAVVDSFEEKSGQEEEDDSIRLAIIGRPNVGKSSFVNALLGTNRNIVSNKPGTTRDAIDTRFKRNGREIVLIDTAGLRKRARIDAGIEFYSSLRTERAIERCDVALVLIDAEQGLEKQDMKIIEMAAERKKGVLLLVNKWDLIEKDSKTSKLYSDRMYDDMGNLGWIPIQFISAMTKKNLYRAIDAALDIQEQRSQQITTSDLNRFLQDTLLQAPPSSKSGKELKIKYMTQIRAPWPVFAFFCNDPKLLQNNYKRFLEKRIRQNYNLSGVPFSLRFMQK</sequence>
<proteinExistence type="inferred from homology"/>
<gene>
    <name evidence="1" type="primary">der</name>
    <name type="synonym">engA</name>
    <name type="ordered locus">Paes_1813</name>
</gene>
<dbReference type="EMBL" id="CP001108">
    <property type="protein sequence ID" value="ACF46825.1"/>
    <property type="molecule type" value="Genomic_DNA"/>
</dbReference>
<dbReference type="RefSeq" id="WP_012506358.1">
    <property type="nucleotide sequence ID" value="NC_011059.1"/>
</dbReference>
<dbReference type="SMR" id="B4S433"/>
<dbReference type="STRING" id="290512.Paes_1813"/>
<dbReference type="KEGG" id="paa:Paes_1813"/>
<dbReference type="eggNOG" id="COG1160">
    <property type="taxonomic scope" value="Bacteria"/>
</dbReference>
<dbReference type="HOGENOM" id="CLU_016077_6_2_10"/>
<dbReference type="Proteomes" id="UP000002725">
    <property type="component" value="Chromosome"/>
</dbReference>
<dbReference type="GO" id="GO:0005525">
    <property type="term" value="F:GTP binding"/>
    <property type="evidence" value="ECO:0007669"/>
    <property type="project" value="UniProtKB-UniRule"/>
</dbReference>
<dbReference type="GO" id="GO:0043022">
    <property type="term" value="F:ribosome binding"/>
    <property type="evidence" value="ECO:0007669"/>
    <property type="project" value="TreeGrafter"/>
</dbReference>
<dbReference type="GO" id="GO:0042254">
    <property type="term" value="P:ribosome biogenesis"/>
    <property type="evidence" value="ECO:0007669"/>
    <property type="project" value="UniProtKB-KW"/>
</dbReference>
<dbReference type="CDD" id="cd01894">
    <property type="entry name" value="EngA1"/>
    <property type="match status" value="1"/>
</dbReference>
<dbReference type="CDD" id="cd01895">
    <property type="entry name" value="EngA2"/>
    <property type="match status" value="1"/>
</dbReference>
<dbReference type="FunFam" id="3.40.50.300:FF:000040">
    <property type="entry name" value="GTPase Der"/>
    <property type="match status" value="1"/>
</dbReference>
<dbReference type="Gene3D" id="3.30.300.20">
    <property type="match status" value="1"/>
</dbReference>
<dbReference type="Gene3D" id="3.40.50.300">
    <property type="entry name" value="P-loop containing nucleotide triphosphate hydrolases"/>
    <property type="match status" value="2"/>
</dbReference>
<dbReference type="HAMAP" id="MF_00195">
    <property type="entry name" value="GTPase_Der"/>
    <property type="match status" value="1"/>
</dbReference>
<dbReference type="InterPro" id="IPR031166">
    <property type="entry name" value="G_ENGA"/>
</dbReference>
<dbReference type="InterPro" id="IPR006073">
    <property type="entry name" value="GTP-bd"/>
</dbReference>
<dbReference type="InterPro" id="IPR016484">
    <property type="entry name" value="GTPase_Der"/>
</dbReference>
<dbReference type="InterPro" id="IPR032859">
    <property type="entry name" value="KH_dom-like"/>
</dbReference>
<dbReference type="InterPro" id="IPR015946">
    <property type="entry name" value="KH_dom-like_a/b"/>
</dbReference>
<dbReference type="InterPro" id="IPR027417">
    <property type="entry name" value="P-loop_NTPase"/>
</dbReference>
<dbReference type="InterPro" id="IPR005225">
    <property type="entry name" value="Small_GTP-bd"/>
</dbReference>
<dbReference type="NCBIfam" id="TIGR03594">
    <property type="entry name" value="GTPase_EngA"/>
    <property type="match status" value="1"/>
</dbReference>
<dbReference type="NCBIfam" id="TIGR00231">
    <property type="entry name" value="small_GTP"/>
    <property type="match status" value="2"/>
</dbReference>
<dbReference type="PANTHER" id="PTHR43834">
    <property type="entry name" value="GTPASE DER"/>
    <property type="match status" value="1"/>
</dbReference>
<dbReference type="PANTHER" id="PTHR43834:SF6">
    <property type="entry name" value="GTPASE DER"/>
    <property type="match status" value="1"/>
</dbReference>
<dbReference type="Pfam" id="PF14714">
    <property type="entry name" value="KH_dom-like"/>
    <property type="match status" value="1"/>
</dbReference>
<dbReference type="Pfam" id="PF01926">
    <property type="entry name" value="MMR_HSR1"/>
    <property type="match status" value="2"/>
</dbReference>
<dbReference type="PIRSF" id="PIRSF006485">
    <property type="entry name" value="GTP-binding_EngA"/>
    <property type="match status" value="1"/>
</dbReference>
<dbReference type="PRINTS" id="PR00326">
    <property type="entry name" value="GTP1OBG"/>
</dbReference>
<dbReference type="SUPFAM" id="SSF52540">
    <property type="entry name" value="P-loop containing nucleoside triphosphate hydrolases"/>
    <property type="match status" value="2"/>
</dbReference>
<dbReference type="PROSITE" id="PS51712">
    <property type="entry name" value="G_ENGA"/>
    <property type="match status" value="2"/>
</dbReference>
<comment type="function">
    <text evidence="1">GTPase that plays an essential role in the late steps of ribosome biogenesis.</text>
</comment>
<comment type="subunit">
    <text evidence="1">Associates with the 50S ribosomal subunit.</text>
</comment>
<comment type="similarity">
    <text evidence="1">Belongs to the TRAFAC class TrmE-Era-EngA-EngB-Septin-like GTPase superfamily. EngA (Der) GTPase family.</text>
</comment>
<feature type="chain" id="PRO_1000099148" description="GTPase Der">
    <location>
        <begin position="1"/>
        <end position="436"/>
    </location>
</feature>
<feature type="domain" description="EngA-type G 1">
    <location>
        <begin position="3"/>
        <end position="168"/>
    </location>
</feature>
<feature type="domain" description="EngA-type G 2">
    <location>
        <begin position="177"/>
        <end position="352"/>
    </location>
</feature>
<feature type="domain" description="KH-like" evidence="1">
    <location>
        <begin position="353"/>
        <end position="436"/>
    </location>
</feature>
<feature type="binding site" evidence="1">
    <location>
        <begin position="9"/>
        <end position="16"/>
    </location>
    <ligand>
        <name>GTP</name>
        <dbReference type="ChEBI" id="CHEBI:37565"/>
        <label>1</label>
    </ligand>
</feature>
<feature type="binding site" evidence="1">
    <location>
        <begin position="56"/>
        <end position="60"/>
    </location>
    <ligand>
        <name>GTP</name>
        <dbReference type="ChEBI" id="CHEBI:37565"/>
        <label>1</label>
    </ligand>
</feature>
<feature type="binding site" evidence="1">
    <location>
        <begin position="120"/>
        <end position="123"/>
    </location>
    <ligand>
        <name>GTP</name>
        <dbReference type="ChEBI" id="CHEBI:37565"/>
        <label>1</label>
    </ligand>
</feature>
<feature type="binding site" evidence="1">
    <location>
        <begin position="183"/>
        <end position="190"/>
    </location>
    <ligand>
        <name>GTP</name>
        <dbReference type="ChEBI" id="CHEBI:37565"/>
        <label>2</label>
    </ligand>
</feature>
<feature type="binding site" evidence="1">
    <location>
        <begin position="230"/>
        <end position="234"/>
    </location>
    <ligand>
        <name>GTP</name>
        <dbReference type="ChEBI" id="CHEBI:37565"/>
        <label>2</label>
    </ligand>
</feature>
<feature type="binding site" evidence="1">
    <location>
        <begin position="295"/>
        <end position="298"/>
    </location>
    <ligand>
        <name>GTP</name>
        <dbReference type="ChEBI" id="CHEBI:37565"/>
        <label>2</label>
    </ligand>
</feature>
<keyword id="KW-0342">GTP-binding</keyword>
<keyword id="KW-0547">Nucleotide-binding</keyword>
<keyword id="KW-0677">Repeat</keyword>
<keyword id="KW-0690">Ribosome biogenesis</keyword>
<accession>B4S433</accession>
<evidence type="ECO:0000255" key="1">
    <source>
        <dbReference type="HAMAP-Rule" id="MF_00195"/>
    </source>
</evidence>
<protein>
    <recommendedName>
        <fullName evidence="1">GTPase Der</fullName>
    </recommendedName>
    <alternativeName>
        <fullName evidence="1">GTP-binding protein EngA</fullName>
    </alternativeName>
</protein>
<organism>
    <name type="scientific">Prosthecochloris aestuarii (strain DSM 271 / SK 413)</name>
    <dbReference type="NCBI Taxonomy" id="290512"/>
    <lineage>
        <taxon>Bacteria</taxon>
        <taxon>Pseudomonadati</taxon>
        <taxon>Chlorobiota</taxon>
        <taxon>Chlorobiia</taxon>
        <taxon>Chlorobiales</taxon>
        <taxon>Chlorobiaceae</taxon>
        <taxon>Prosthecochloris</taxon>
    </lineage>
</organism>
<name>DER_PROA2</name>